<feature type="chain" id="PRO_0000416625" description="Putative uncharacterized transmembrane protein C1235.18">
    <location>
        <begin position="1"/>
        <end position="159"/>
    </location>
</feature>
<feature type="transmembrane region" description="Helical" evidence="1">
    <location>
        <begin position="22"/>
        <end position="42"/>
    </location>
</feature>
<feature type="transmembrane region" description="Helical" evidence="1">
    <location>
        <begin position="45"/>
        <end position="65"/>
    </location>
</feature>
<feature type="transmembrane region" description="Helical" evidence="1">
    <location>
        <begin position="80"/>
        <end position="100"/>
    </location>
</feature>
<feature type="transmembrane region" description="Helical" evidence="1">
    <location>
        <begin position="104"/>
        <end position="124"/>
    </location>
</feature>
<sequence length="159" mass="17694">MTPRNPSNYDSLFDSSIFSSTLFSSSLYHSAFDCSFGISFTIQPPIEYIVLSKPCFFAITPLLTLRCNGIAWHDSLDMTIWVSTVTSLPISHCLIVSLSLSHAFPSLFYSALVLSCLSLLCLAFTPRIPFHLHSVVCSYFGRECLSPLFPSPYFTCHNG</sequence>
<dbReference type="EMBL" id="CU329672">
    <property type="protein sequence ID" value="CCD31390.1"/>
    <property type="molecule type" value="Genomic_DNA"/>
</dbReference>
<dbReference type="RefSeq" id="XP_004001740.1">
    <property type="nucleotide sequence ID" value="XM_004001691.1"/>
</dbReference>
<dbReference type="STRING" id="284812.G2TRT8"/>
<dbReference type="PaxDb" id="4896-SPCC1235.18.1"/>
<dbReference type="EnsemblFungi" id="SPCC1235.18.1">
    <property type="protein sequence ID" value="SPCC1235.18.1:pep"/>
    <property type="gene ID" value="SPCC1235.18"/>
</dbReference>
<dbReference type="PomBase" id="SPCC1235.18"/>
<dbReference type="VEuPathDB" id="FungiDB:SPCC1235.18"/>
<dbReference type="HOGENOM" id="CLU_1661816_0_0_1"/>
<dbReference type="InParanoid" id="G2TRT8"/>
<dbReference type="PRO" id="PR:G2TRT8"/>
<dbReference type="Proteomes" id="UP000002485">
    <property type="component" value="Chromosome III"/>
</dbReference>
<dbReference type="GO" id="GO:0016020">
    <property type="term" value="C:membrane"/>
    <property type="evidence" value="ECO:0007669"/>
    <property type="project" value="UniProtKB-SubCell"/>
</dbReference>
<comment type="subcellular location">
    <subcellularLocation>
        <location evidence="2">Membrane</location>
        <topology evidence="2">Multi-pass membrane protein</topology>
    </subcellularLocation>
</comment>
<proteinExistence type="predicted"/>
<name>YCYI_SCHPO</name>
<keyword id="KW-0472">Membrane</keyword>
<keyword id="KW-1185">Reference proteome</keyword>
<keyword id="KW-0812">Transmembrane</keyword>
<keyword id="KW-1133">Transmembrane helix</keyword>
<protein>
    <recommendedName>
        <fullName>Putative uncharacterized transmembrane protein C1235.18</fullName>
    </recommendedName>
</protein>
<organism>
    <name type="scientific">Schizosaccharomyces pombe (strain 972 / ATCC 24843)</name>
    <name type="common">Fission yeast</name>
    <dbReference type="NCBI Taxonomy" id="284812"/>
    <lineage>
        <taxon>Eukaryota</taxon>
        <taxon>Fungi</taxon>
        <taxon>Dikarya</taxon>
        <taxon>Ascomycota</taxon>
        <taxon>Taphrinomycotina</taxon>
        <taxon>Schizosaccharomycetes</taxon>
        <taxon>Schizosaccharomycetales</taxon>
        <taxon>Schizosaccharomycetaceae</taxon>
        <taxon>Schizosaccharomyces</taxon>
    </lineage>
</organism>
<accession>G2TRT8</accession>
<evidence type="ECO:0000255" key="1"/>
<evidence type="ECO:0000305" key="2"/>
<gene>
    <name type="ORF">SPCC1235.18</name>
</gene>
<reference key="1">
    <citation type="journal article" date="2002" name="Nature">
        <title>The genome sequence of Schizosaccharomyces pombe.</title>
        <authorList>
            <person name="Wood V."/>
            <person name="Gwilliam R."/>
            <person name="Rajandream M.A."/>
            <person name="Lyne M.H."/>
            <person name="Lyne R."/>
            <person name="Stewart A."/>
            <person name="Sgouros J.G."/>
            <person name="Peat N."/>
            <person name="Hayles J."/>
            <person name="Baker S.G."/>
            <person name="Basham D."/>
            <person name="Bowman S."/>
            <person name="Brooks K."/>
            <person name="Brown D."/>
            <person name="Brown S."/>
            <person name="Chillingworth T."/>
            <person name="Churcher C.M."/>
            <person name="Collins M."/>
            <person name="Connor R."/>
            <person name="Cronin A."/>
            <person name="Davis P."/>
            <person name="Feltwell T."/>
            <person name="Fraser A."/>
            <person name="Gentles S."/>
            <person name="Goble A."/>
            <person name="Hamlin N."/>
            <person name="Harris D.E."/>
            <person name="Hidalgo J."/>
            <person name="Hodgson G."/>
            <person name="Holroyd S."/>
            <person name="Hornsby T."/>
            <person name="Howarth S."/>
            <person name="Huckle E.J."/>
            <person name="Hunt S."/>
            <person name="Jagels K."/>
            <person name="James K.D."/>
            <person name="Jones L."/>
            <person name="Jones M."/>
            <person name="Leather S."/>
            <person name="McDonald S."/>
            <person name="McLean J."/>
            <person name="Mooney P."/>
            <person name="Moule S."/>
            <person name="Mungall K.L."/>
            <person name="Murphy L.D."/>
            <person name="Niblett D."/>
            <person name="Odell C."/>
            <person name="Oliver K."/>
            <person name="O'Neil S."/>
            <person name="Pearson D."/>
            <person name="Quail M.A."/>
            <person name="Rabbinowitsch E."/>
            <person name="Rutherford K.M."/>
            <person name="Rutter S."/>
            <person name="Saunders D."/>
            <person name="Seeger K."/>
            <person name="Sharp S."/>
            <person name="Skelton J."/>
            <person name="Simmonds M.N."/>
            <person name="Squares R."/>
            <person name="Squares S."/>
            <person name="Stevens K."/>
            <person name="Taylor K."/>
            <person name="Taylor R.G."/>
            <person name="Tivey A."/>
            <person name="Walsh S.V."/>
            <person name="Warren T."/>
            <person name="Whitehead S."/>
            <person name="Woodward J.R."/>
            <person name="Volckaert G."/>
            <person name="Aert R."/>
            <person name="Robben J."/>
            <person name="Grymonprez B."/>
            <person name="Weltjens I."/>
            <person name="Vanstreels E."/>
            <person name="Rieger M."/>
            <person name="Schaefer M."/>
            <person name="Mueller-Auer S."/>
            <person name="Gabel C."/>
            <person name="Fuchs M."/>
            <person name="Duesterhoeft A."/>
            <person name="Fritzc C."/>
            <person name="Holzer E."/>
            <person name="Moestl D."/>
            <person name="Hilbert H."/>
            <person name="Borzym K."/>
            <person name="Langer I."/>
            <person name="Beck A."/>
            <person name="Lehrach H."/>
            <person name="Reinhardt R."/>
            <person name="Pohl T.M."/>
            <person name="Eger P."/>
            <person name="Zimmermann W."/>
            <person name="Wedler H."/>
            <person name="Wambutt R."/>
            <person name="Purnelle B."/>
            <person name="Goffeau A."/>
            <person name="Cadieu E."/>
            <person name="Dreano S."/>
            <person name="Gloux S."/>
            <person name="Lelaure V."/>
            <person name="Mottier S."/>
            <person name="Galibert F."/>
            <person name="Aves S.J."/>
            <person name="Xiang Z."/>
            <person name="Hunt C."/>
            <person name="Moore K."/>
            <person name="Hurst S.M."/>
            <person name="Lucas M."/>
            <person name="Rochet M."/>
            <person name="Gaillardin C."/>
            <person name="Tallada V.A."/>
            <person name="Garzon A."/>
            <person name="Thode G."/>
            <person name="Daga R.R."/>
            <person name="Cruzado L."/>
            <person name="Jimenez J."/>
            <person name="Sanchez M."/>
            <person name="del Rey F."/>
            <person name="Benito J."/>
            <person name="Dominguez A."/>
            <person name="Revuelta J.L."/>
            <person name="Moreno S."/>
            <person name="Armstrong J."/>
            <person name="Forsburg S.L."/>
            <person name="Cerutti L."/>
            <person name="Lowe T."/>
            <person name="McCombie W.R."/>
            <person name="Paulsen I."/>
            <person name="Potashkin J."/>
            <person name="Shpakovski G.V."/>
            <person name="Ussery D."/>
            <person name="Barrell B.G."/>
            <person name="Nurse P."/>
        </authorList>
    </citation>
    <scope>NUCLEOTIDE SEQUENCE [LARGE SCALE GENOMIC DNA]</scope>
    <source>
        <strain>972 / ATCC 24843</strain>
    </source>
</reference>
<reference key="2">
    <citation type="journal article" date="2011" name="Science">
        <title>Comparative functional genomics of the fission yeasts.</title>
        <authorList>
            <person name="Rhind N."/>
            <person name="Chen Z."/>
            <person name="Yassour M."/>
            <person name="Thompson D.A."/>
            <person name="Haas B.J."/>
            <person name="Habib N."/>
            <person name="Wapinski I."/>
            <person name="Roy S."/>
            <person name="Lin M.F."/>
            <person name="Heiman D.I."/>
            <person name="Young S.K."/>
            <person name="Furuya K."/>
            <person name="Guo Y."/>
            <person name="Pidoux A."/>
            <person name="Chen H.M."/>
            <person name="Robbertse B."/>
            <person name="Goldberg J.M."/>
            <person name="Aoki K."/>
            <person name="Bayne E.H."/>
            <person name="Berlin A.M."/>
            <person name="Desjardins C.A."/>
            <person name="Dobbs E."/>
            <person name="Dukaj L."/>
            <person name="Fan L."/>
            <person name="FitzGerald M.G."/>
            <person name="French C."/>
            <person name="Gujja S."/>
            <person name="Hansen K."/>
            <person name="Keifenheim D."/>
            <person name="Levin J.Z."/>
            <person name="Mosher R.A."/>
            <person name="Mueller C.A."/>
            <person name="Pfiffner J."/>
            <person name="Priest M."/>
            <person name="Russ C."/>
            <person name="Smialowska A."/>
            <person name="Swoboda P."/>
            <person name="Sykes S.M."/>
            <person name="Vaughn M."/>
            <person name="Vengrova S."/>
            <person name="Yoder R."/>
            <person name="Zeng Q."/>
            <person name="Allshire R."/>
            <person name="Baulcombe D."/>
            <person name="Birren B.W."/>
            <person name="Brown W."/>
            <person name="Ekwall K."/>
            <person name="Kellis M."/>
            <person name="Leatherwood J."/>
            <person name="Levin H."/>
            <person name="Margalit H."/>
            <person name="Martienssen R."/>
            <person name="Nieduszynski C.A."/>
            <person name="Spatafora J.W."/>
            <person name="Friedman N."/>
            <person name="Dalgaard J.Z."/>
            <person name="Baumann P."/>
            <person name="Niki H."/>
            <person name="Regev A."/>
            <person name="Nusbaum C."/>
        </authorList>
    </citation>
    <scope>IDENTIFICATION</scope>
</reference>